<reference key="1">
    <citation type="journal article" date="1992" name="Proc. Natl. Acad. Sci. U.S.A.">
        <title>Glutamate receptors of Drosophila melanogaster: cloning of a kainate-selective subunit expressed in the central nervous system.</title>
        <authorList>
            <person name="Ultsch A."/>
            <person name="Schuster C.M."/>
            <person name="Laube B."/>
            <person name="Schloss P."/>
            <person name="Schmitt B."/>
            <person name="Betz H."/>
        </authorList>
    </citation>
    <scope>NUCLEOTIDE SEQUENCE [MRNA] (ISOFORM 1)</scope>
    <scope>FUNCTION</scope>
    <scope>SUBCELLULAR LOCATION</scope>
    <scope>TISSUE SPECIFICITY</scope>
    <scope>DEVELOPMENTAL STAGE</scope>
    <source>
        <strain>Canton-S</strain>
        <tissue>Embryo</tissue>
    </source>
</reference>
<reference key="2">
    <citation type="journal article" date="2000" name="Science">
        <title>The genome sequence of Drosophila melanogaster.</title>
        <authorList>
            <person name="Adams M.D."/>
            <person name="Celniker S.E."/>
            <person name="Holt R.A."/>
            <person name="Evans C.A."/>
            <person name="Gocayne J.D."/>
            <person name="Amanatides P.G."/>
            <person name="Scherer S.E."/>
            <person name="Li P.W."/>
            <person name="Hoskins R.A."/>
            <person name="Galle R.F."/>
            <person name="George R.A."/>
            <person name="Lewis S.E."/>
            <person name="Richards S."/>
            <person name="Ashburner M."/>
            <person name="Henderson S.N."/>
            <person name="Sutton G.G."/>
            <person name="Wortman J.R."/>
            <person name="Yandell M.D."/>
            <person name="Zhang Q."/>
            <person name="Chen L.X."/>
            <person name="Brandon R.C."/>
            <person name="Rogers Y.-H.C."/>
            <person name="Blazej R.G."/>
            <person name="Champe M."/>
            <person name="Pfeiffer B.D."/>
            <person name="Wan K.H."/>
            <person name="Doyle C."/>
            <person name="Baxter E.G."/>
            <person name="Helt G."/>
            <person name="Nelson C.R."/>
            <person name="Miklos G.L.G."/>
            <person name="Abril J.F."/>
            <person name="Agbayani A."/>
            <person name="An H.-J."/>
            <person name="Andrews-Pfannkoch C."/>
            <person name="Baldwin D."/>
            <person name="Ballew R.M."/>
            <person name="Basu A."/>
            <person name="Baxendale J."/>
            <person name="Bayraktaroglu L."/>
            <person name="Beasley E.M."/>
            <person name="Beeson K.Y."/>
            <person name="Benos P.V."/>
            <person name="Berman B.P."/>
            <person name="Bhandari D."/>
            <person name="Bolshakov S."/>
            <person name="Borkova D."/>
            <person name="Botchan M.R."/>
            <person name="Bouck J."/>
            <person name="Brokstein P."/>
            <person name="Brottier P."/>
            <person name="Burtis K.C."/>
            <person name="Busam D.A."/>
            <person name="Butler H."/>
            <person name="Cadieu E."/>
            <person name="Center A."/>
            <person name="Chandra I."/>
            <person name="Cherry J.M."/>
            <person name="Cawley S."/>
            <person name="Dahlke C."/>
            <person name="Davenport L.B."/>
            <person name="Davies P."/>
            <person name="de Pablos B."/>
            <person name="Delcher A."/>
            <person name="Deng Z."/>
            <person name="Mays A.D."/>
            <person name="Dew I."/>
            <person name="Dietz S.M."/>
            <person name="Dodson K."/>
            <person name="Doup L.E."/>
            <person name="Downes M."/>
            <person name="Dugan-Rocha S."/>
            <person name="Dunkov B.C."/>
            <person name="Dunn P."/>
            <person name="Durbin K.J."/>
            <person name="Evangelista C.C."/>
            <person name="Ferraz C."/>
            <person name="Ferriera S."/>
            <person name="Fleischmann W."/>
            <person name="Fosler C."/>
            <person name="Gabrielian A.E."/>
            <person name="Garg N.S."/>
            <person name="Gelbart W.M."/>
            <person name="Glasser K."/>
            <person name="Glodek A."/>
            <person name="Gong F."/>
            <person name="Gorrell J.H."/>
            <person name="Gu Z."/>
            <person name="Guan P."/>
            <person name="Harris M."/>
            <person name="Harris N.L."/>
            <person name="Harvey D.A."/>
            <person name="Heiman T.J."/>
            <person name="Hernandez J.R."/>
            <person name="Houck J."/>
            <person name="Hostin D."/>
            <person name="Houston K.A."/>
            <person name="Howland T.J."/>
            <person name="Wei M.-H."/>
            <person name="Ibegwam C."/>
            <person name="Jalali M."/>
            <person name="Kalush F."/>
            <person name="Karpen G.H."/>
            <person name="Ke Z."/>
            <person name="Kennison J.A."/>
            <person name="Ketchum K.A."/>
            <person name="Kimmel B.E."/>
            <person name="Kodira C.D."/>
            <person name="Kraft C.L."/>
            <person name="Kravitz S."/>
            <person name="Kulp D."/>
            <person name="Lai Z."/>
            <person name="Lasko P."/>
            <person name="Lei Y."/>
            <person name="Levitsky A.A."/>
            <person name="Li J.H."/>
            <person name="Li Z."/>
            <person name="Liang Y."/>
            <person name="Lin X."/>
            <person name="Liu X."/>
            <person name="Mattei B."/>
            <person name="McIntosh T.C."/>
            <person name="McLeod M.P."/>
            <person name="McPherson D."/>
            <person name="Merkulov G."/>
            <person name="Milshina N.V."/>
            <person name="Mobarry C."/>
            <person name="Morris J."/>
            <person name="Moshrefi A."/>
            <person name="Mount S.M."/>
            <person name="Moy M."/>
            <person name="Murphy B."/>
            <person name="Murphy L."/>
            <person name="Muzny D.M."/>
            <person name="Nelson D.L."/>
            <person name="Nelson D.R."/>
            <person name="Nelson K.A."/>
            <person name="Nixon K."/>
            <person name="Nusskern D.R."/>
            <person name="Pacleb J.M."/>
            <person name="Palazzolo M."/>
            <person name="Pittman G.S."/>
            <person name="Pan S."/>
            <person name="Pollard J."/>
            <person name="Puri V."/>
            <person name="Reese M.G."/>
            <person name="Reinert K."/>
            <person name="Remington K."/>
            <person name="Saunders R.D.C."/>
            <person name="Scheeler F."/>
            <person name="Shen H."/>
            <person name="Shue B.C."/>
            <person name="Siden-Kiamos I."/>
            <person name="Simpson M."/>
            <person name="Skupski M.P."/>
            <person name="Smith T.J."/>
            <person name="Spier E."/>
            <person name="Spradling A.C."/>
            <person name="Stapleton M."/>
            <person name="Strong R."/>
            <person name="Sun E."/>
            <person name="Svirskas R."/>
            <person name="Tector C."/>
            <person name="Turner R."/>
            <person name="Venter E."/>
            <person name="Wang A.H."/>
            <person name="Wang X."/>
            <person name="Wang Z.-Y."/>
            <person name="Wassarman D.A."/>
            <person name="Weinstock G.M."/>
            <person name="Weissenbach J."/>
            <person name="Williams S.M."/>
            <person name="Woodage T."/>
            <person name="Worley K.C."/>
            <person name="Wu D."/>
            <person name="Yang S."/>
            <person name="Yao Q.A."/>
            <person name="Ye J."/>
            <person name="Yeh R.-F."/>
            <person name="Zaveri J.S."/>
            <person name="Zhan M."/>
            <person name="Zhang G."/>
            <person name="Zhao Q."/>
            <person name="Zheng L."/>
            <person name="Zheng X.H."/>
            <person name="Zhong F.N."/>
            <person name="Zhong W."/>
            <person name="Zhou X."/>
            <person name="Zhu S.C."/>
            <person name="Zhu X."/>
            <person name="Smith H.O."/>
            <person name="Gibbs R.A."/>
            <person name="Myers E.W."/>
            <person name="Rubin G.M."/>
            <person name="Venter J.C."/>
        </authorList>
    </citation>
    <scope>NUCLEOTIDE SEQUENCE [LARGE SCALE GENOMIC DNA]</scope>
    <source>
        <strain>Berkeley</strain>
    </source>
</reference>
<reference key="3">
    <citation type="journal article" date="2002" name="Genome Biol.">
        <title>Annotation of the Drosophila melanogaster euchromatic genome: a systematic review.</title>
        <authorList>
            <person name="Misra S."/>
            <person name="Crosby M.A."/>
            <person name="Mungall C.J."/>
            <person name="Matthews B.B."/>
            <person name="Campbell K.S."/>
            <person name="Hradecky P."/>
            <person name="Huang Y."/>
            <person name="Kaminker J.S."/>
            <person name="Millburn G.H."/>
            <person name="Prochnik S.E."/>
            <person name="Smith C.D."/>
            <person name="Tupy J.L."/>
            <person name="Whitfield E.J."/>
            <person name="Bayraktaroglu L."/>
            <person name="Berman B.P."/>
            <person name="Bettencourt B.R."/>
            <person name="Celniker S.E."/>
            <person name="de Grey A.D.N.J."/>
            <person name="Drysdale R.A."/>
            <person name="Harris N.L."/>
            <person name="Richter J."/>
            <person name="Russo S."/>
            <person name="Schroeder A.J."/>
            <person name="Shu S.Q."/>
            <person name="Stapleton M."/>
            <person name="Yamada C."/>
            <person name="Ashburner M."/>
            <person name="Gelbart W.M."/>
            <person name="Rubin G.M."/>
            <person name="Lewis S.E."/>
        </authorList>
    </citation>
    <scope>GENOME REANNOTATION</scope>
    <source>
        <strain>Berkeley</strain>
    </source>
</reference>
<reference key="4">
    <citation type="submission" date="2008-11" db="EMBL/GenBank/DDBJ databases">
        <authorList>
            <person name="Stapleton M."/>
            <person name="Brokstein P."/>
            <person name="Hong L."/>
            <person name="Agbayani A."/>
            <person name="Carlson J.W."/>
            <person name="Booth B."/>
            <person name="Champe M."/>
            <person name="Chavez C."/>
            <person name="Dorsett V."/>
            <person name="Dresnek D."/>
            <person name="Farfan D."/>
            <person name="Frise E."/>
            <person name="George R.A."/>
            <person name="Gonzalez M."/>
            <person name="Guarin H."/>
            <person name="Kronmiller B."/>
            <person name="Li P.W."/>
            <person name="Liao G."/>
            <person name="Miranda A."/>
            <person name="Mungall C.J."/>
            <person name="Nunoo J."/>
            <person name="Pacleb J.M."/>
            <person name="Paragas V."/>
            <person name="Park S."/>
            <person name="Patel S."/>
            <person name="Phouanenavong S."/>
            <person name="Wan K.H."/>
            <person name="Yu C."/>
            <person name="Lewis S.E."/>
            <person name="Rubin G.M."/>
            <person name="Celniker S.E."/>
        </authorList>
    </citation>
    <scope>NUCLEOTIDE SEQUENCE [LARGE SCALE MRNA] (ISOFORMS 1 AND 2)</scope>
    <source>
        <strain>Berkeley</strain>
        <tissue>Embryo</tissue>
    </source>
</reference>
<dbReference type="EMBL" id="M97192">
    <property type="protein sequence ID" value="AAA28575.1"/>
    <property type="molecule type" value="mRNA"/>
</dbReference>
<dbReference type="EMBL" id="AE014296">
    <property type="protein sequence ID" value="AAF50652.2"/>
    <property type="molecule type" value="Genomic_DNA"/>
</dbReference>
<dbReference type="EMBL" id="BT003218">
    <property type="protein sequence ID" value="AAO24973.1"/>
    <property type="molecule type" value="mRNA"/>
</dbReference>
<dbReference type="EMBL" id="BT050435">
    <property type="protein sequence ID" value="ACJ13142.1"/>
    <property type="molecule type" value="mRNA"/>
</dbReference>
<dbReference type="PIR" id="A46421">
    <property type="entry name" value="A46421"/>
</dbReference>
<dbReference type="RefSeq" id="NP_476855.1">
    <molecule id="Q03445-1"/>
    <property type="nucleotide sequence ID" value="NM_057507.4"/>
</dbReference>
<dbReference type="PDB" id="5DT6">
    <property type="method" value="X-ray"/>
    <property type="resolution" value="1.60 A"/>
    <property type="chains" value="A=474-594, A=739-880"/>
</dbReference>
<dbReference type="PDB" id="5ICT">
    <property type="method" value="X-ray"/>
    <property type="resolution" value="1.68 A"/>
    <property type="chains" value="A=474-594, A=739-880"/>
</dbReference>
<dbReference type="PDBsum" id="5DT6"/>
<dbReference type="PDBsum" id="5ICT"/>
<dbReference type="SMR" id="Q03445"/>
<dbReference type="BioGRID" id="64192">
    <property type="interactions" value="1"/>
</dbReference>
<dbReference type="FunCoup" id="Q03445">
    <property type="interactions" value="238"/>
</dbReference>
<dbReference type="IntAct" id="Q03445">
    <property type="interactions" value="1"/>
</dbReference>
<dbReference type="STRING" id="7227.FBpp0076691"/>
<dbReference type="GlyCosmos" id="Q03445">
    <property type="glycosylation" value="9 sites, No reported glycans"/>
</dbReference>
<dbReference type="GlyGen" id="Q03445">
    <property type="glycosylation" value="9 sites"/>
</dbReference>
<dbReference type="PaxDb" id="7227-FBpp0076691"/>
<dbReference type="EnsemblMetazoa" id="FBtr0076982">
    <molecule id="Q03445-1"/>
    <property type="protein sequence ID" value="FBpp0076691"/>
    <property type="gene ID" value="FBgn0004619"/>
</dbReference>
<dbReference type="GeneID" id="38742"/>
<dbReference type="KEGG" id="dme:Dmel_CG8442"/>
<dbReference type="AGR" id="FB:FBgn0004619"/>
<dbReference type="CTD" id="38742"/>
<dbReference type="FlyBase" id="FBgn0004619">
    <property type="gene designation" value="GluRIA"/>
</dbReference>
<dbReference type="VEuPathDB" id="VectorBase:FBgn0004619"/>
<dbReference type="eggNOG" id="KOG1054">
    <property type="taxonomic scope" value="Eukaryota"/>
</dbReference>
<dbReference type="GeneTree" id="ENSGT00940000168258"/>
<dbReference type="HOGENOM" id="CLU_007257_1_2_1"/>
<dbReference type="InParanoid" id="Q03445"/>
<dbReference type="OMA" id="WDFFQRS"/>
<dbReference type="OrthoDB" id="5984008at2759"/>
<dbReference type="PhylomeDB" id="Q03445"/>
<dbReference type="Reactome" id="R-DME-204005">
    <property type="pathway name" value="COPII-mediated vesicle transport"/>
</dbReference>
<dbReference type="Reactome" id="R-DME-399710">
    <property type="pathway name" value="Activation of AMPA receptors"/>
</dbReference>
<dbReference type="Reactome" id="R-DME-416993">
    <property type="pathway name" value="Trafficking of GluR2-containing AMPA receptors"/>
</dbReference>
<dbReference type="Reactome" id="R-DME-438066">
    <property type="pathway name" value="Unblocking of NMDA receptors, glutamate binding and activation"/>
</dbReference>
<dbReference type="Reactome" id="R-DME-5694530">
    <property type="pathway name" value="Cargo concentration in the ER"/>
</dbReference>
<dbReference type="Reactome" id="R-DME-8849932">
    <property type="pathway name" value="Synaptic adhesion-like molecules"/>
</dbReference>
<dbReference type="BioGRID-ORCS" id="38742">
    <property type="hits" value="0 hits in 3 CRISPR screens"/>
</dbReference>
<dbReference type="GenomeRNAi" id="38742"/>
<dbReference type="PRO" id="PR:Q03445"/>
<dbReference type="Proteomes" id="UP000000803">
    <property type="component" value="Chromosome 3L"/>
</dbReference>
<dbReference type="Bgee" id="FBgn0004619">
    <property type="expression patterns" value="Expressed in centrifugal neuron C3 (Drosophila) in insect head and 105 other cell types or tissues"/>
</dbReference>
<dbReference type="GO" id="GO:0008328">
    <property type="term" value="C:ionotropic glutamate receptor complex"/>
    <property type="evidence" value="ECO:0000305"/>
    <property type="project" value="FlyBase"/>
</dbReference>
<dbReference type="GO" id="GO:0005886">
    <property type="term" value="C:plasma membrane"/>
    <property type="evidence" value="ECO:0000318"/>
    <property type="project" value="GO_Central"/>
</dbReference>
<dbReference type="GO" id="GO:0098839">
    <property type="term" value="C:postsynaptic density membrane"/>
    <property type="evidence" value="ECO:0000318"/>
    <property type="project" value="GO_Central"/>
</dbReference>
<dbReference type="GO" id="GO:0008066">
    <property type="term" value="F:glutamate receptor activity"/>
    <property type="evidence" value="ECO:0000318"/>
    <property type="project" value="GO_Central"/>
</dbReference>
<dbReference type="GO" id="GO:0015277">
    <property type="term" value="F:kainate selective glutamate receptor activity"/>
    <property type="evidence" value="ECO:0000314"/>
    <property type="project" value="FlyBase"/>
</dbReference>
<dbReference type="GO" id="GO:1904315">
    <property type="term" value="F:transmitter-gated monoatomic ion channel activity involved in regulation of postsynaptic membrane potential"/>
    <property type="evidence" value="ECO:0000318"/>
    <property type="project" value="GO_Central"/>
</dbReference>
<dbReference type="GO" id="GO:0050804">
    <property type="term" value="P:modulation of chemical synaptic transmission"/>
    <property type="evidence" value="ECO:0000318"/>
    <property type="project" value="GO_Central"/>
</dbReference>
<dbReference type="GO" id="GO:0006812">
    <property type="term" value="P:monoatomic cation transport"/>
    <property type="evidence" value="ECO:0000314"/>
    <property type="project" value="FlyBase"/>
</dbReference>
<dbReference type="GO" id="GO:0035249">
    <property type="term" value="P:synaptic transmission, glutamatergic"/>
    <property type="evidence" value="ECO:0000318"/>
    <property type="project" value="GO_Central"/>
</dbReference>
<dbReference type="CDD" id="cd06380">
    <property type="entry name" value="PBP1_iGluR_AMPA"/>
    <property type="match status" value="1"/>
</dbReference>
<dbReference type="CDD" id="cd13715">
    <property type="entry name" value="PBP2_iGluR_AMPA"/>
    <property type="match status" value="1"/>
</dbReference>
<dbReference type="FunFam" id="3.40.50.2300:FF:000186">
    <property type="entry name" value="Glutamate receptor 1"/>
    <property type="match status" value="1"/>
</dbReference>
<dbReference type="FunFam" id="3.40.190.10:FF:000087">
    <property type="entry name" value="glutamate receptor 4 isoform X2"/>
    <property type="match status" value="1"/>
</dbReference>
<dbReference type="FunFam" id="1.10.287.70:FF:000064">
    <property type="entry name" value="Glutamate receptor ionotropic, kainate"/>
    <property type="match status" value="1"/>
</dbReference>
<dbReference type="FunFam" id="3.40.190.10:FF:000001">
    <property type="entry name" value="Glutamate receptor ionotropic, kainate 2"/>
    <property type="match status" value="1"/>
</dbReference>
<dbReference type="Gene3D" id="1.10.287.70">
    <property type="match status" value="1"/>
</dbReference>
<dbReference type="Gene3D" id="3.40.50.2300">
    <property type="match status" value="2"/>
</dbReference>
<dbReference type="Gene3D" id="3.40.190.10">
    <property type="entry name" value="Periplasmic binding protein-like II"/>
    <property type="match status" value="2"/>
</dbReference>
<dbReference type="InterPro" id="IPR001828">
    <property type="entry name" value="ANF_lig-bd_rcpt"/>
</dbReference>
<dbReference type="InterPro" id="IPR019594">
    <property type="entry name" value="Glu/Gly-bd"/>
</dbReference>
<dbReference type="InterPro" id="IPR015683">
    <property type="entry name" value="Ionotropic_Glu_rcpt"/>
</dbReference>
<dbReference type="InterPro" id="IPR001320">
    <property type="entry name" value="Iontro_rcpt_C"/>
</dbReference>
<dbReference type="InterPro" id="IPR028082">
    <property type="entry name" value="Peripla_BP_I"/>
</dbReference>
<dbReference type="PANTHER" id="PTHR18966">
    <property type="entry name" value="IONOTROPIC GLUTAMATE RECEPTOR"/>
    <property type="match status" value="1"/>
</dbReference>
<dbReference type="Pfam" id="PF01094">
    <property type="entry name" value="ANF_receptor"/>
    <property type="match status" value="1"/>
</dbReference>
<dbReference type="Pfam" id="PF00060">
    <property type="entry name" value="Lig_chan"/>
    <property type="match status" value="1"/>
</dbReference>
<dbReference type="Pfam" id="PF10613">
    <property type="entry name" value="Lig_chan-Glu_bd"/>
    <property type="match status" value="1"/>
</dbReference>
<dbReference type="SMART" id="SM00918">
    <property type="entry name" value="Lig_chan-Glu_bd"/>
    <property type="match status" value="1"/>
</dbReference>
<dbReference type="SMART" id="SM00079">
    <property type="entry name" value="PBPe"/>
    <property type="match status" value="1"/>
</dbReference>
<dbReference type="SUPFAM" id="SSF53822">
    <property type="entry name" value="Periplasmic binding protein-like I"/>
    <property type="match status" value="1"/>
</dbReference>
<dbReference type="SUPFAM" id="SSF53850">
    <property type="entry name" value="Periplasmic binding protein-like II"/>
    <property type="match status" value="1"/>
</dbReference>
<organism>
    <name type="scientific">Drosophila melanogaster</name>
    <name type="common">Fruit fly</name>
    <dbReference type="NCBI Taxonomy" id="7227"/>
    <lineage>
        <taxon>Eukaryota</taxon>
        <taxon>Metazoa</taxon>
        <taxon>Ecdysozoa</taxon>
        <taxon>Arthropoda</taxon>
        <taxon>Hexapoda</taxon>
        <taxon>Insecta</taxon>
        <taxon>Pterygota</taxon>
        <taxon>Neoptera</taxon>
        <taxon>Endopterygota</taxon>
        <taxon>Diptera</taxon>
        <taxon>Brachycera</taxon>
        <taxon>Muscomorpha</taxon>
        <taxon>Ephydroidea</taxon>
        <taxon>Drosophilidae</taxon>
        <taxon>Drosophila</taxon>
        <taxon>Sophophora</taxon>
    </lineage>
</organism>
<keyword id="KW-0002">3D-structure</keyword>
<keyword id="KW-0025">Alternative splicing</keyword>
<keyword id="KW-1003">Cell membrane</keyword>
<keyword id="KW-0325">Glycoprotein</keyword>
<keyword id="KW-0407">Ion channel</keyword>
<keyword id="KW-0406">Ion transport</keyword>
<keyword id="KW-1071">Ligand-gated ion channel</keyword>
<keyword id="KW-0472">Membrane</keyword>
<keyword id="KW-0628">Postsynaptic cell membrane</keyword>
<keyword id="KW-0675">Receptor</keyword>
<keyword id="KW-1185">Reference proteome</keyword>
<keyword id="KW-0732">Signal</keyword>
<keyword id="KW-0770">Synapse</keyword>
<keyword id="KW-0812">Transmembrane</keyword>
<keyword id="KW-1133">Transmembrane helix</keyword>
<keyword id="KW-0813">Transport</keyword>
<protein>
    <recommendedName>
        <fullName>Glutamate receptor 1</fullName>
    </recommendedName>
    <alternativeName>
        <fullName>Glutamate receptor I</fullName>
        <shortName>dGLUR-I</shortName>
    </alternativeName>
    <alternativeName>
        <fullName>Kainate-selective glutamate receptor</fullName>
    </alternativeName>
</protein>
<sequence length="991" mass="111668">MHSRLKFLAYLHFICASSIFWPEFSSAQQQQQTVSLTEKIPLGAIFEQGTDDVQSAFKYAMLNHNLNVSSRRFELQAYVDVINTADAFKLSRLICNQFSRGVYSMLGAVSPDSFDTLHSYSNTFQMPFVTPWFPEKVLAPSSGLLDFAISMRPDYHQAIIDTIQYYGWQSIIYLYDSHDGLLRLQQIYQELKPGNETFRVQMVKRIANVTMAIEFLHTLEDLGRFSKKRIVLDCPAEMAKEIIVQHVRDIKLGRRTYHYLLSGLVMDNHWPSDVVEFGAINITGFRIVDSNRRAVRDFHDSRKRLEPSGQSQSQNAGGPNSLPAISAQAALMYDAVFVLVEAFNRILRKKPDQFRSNHLQRRSHGGSSSSSATGTNESSALLDCNTSKGWVTPWEQGEKISRVLRKVEIDGLSGEIRFDEDGRRINYTLHVVEMSVNSTLQQVAEWRDDAGLLPLHSHNYASSSRSASASTGDYDRNHTYIVSSLLEEPYLSLKQYTYGESLVGNDRFEGYCKDLADMLAAQLGIKYEIRLVQDGNYGAENQYAPGGWDGMVGELIRKEADIAISAMTITAERERVIDFSKPFMTLGISIMIKKPVKQTPGVFSFLNPLSQEIWISVILSYVGVSFVLYFVTRFPPYEWRIVRRPQADSTAQQPPGIIGGATLSEPQAHVPPVPPNEFTMLNSFWYSLAAFMQQGCDITPPSIAGRIAAAVWWFFTIILISSYTANLAAFLTVERMVAPIKTPEDLTMQTDVNYGTLLYGSTWEFFRRSQIGLHNKMWEYMNANQHHSVHTYDEGIRRVRQSKGKYALLVESPKNEYVNARPPCDTMKVGRNIDTKGFGVATPIGSPLRKRLNEAVLTLKENGELLRIRNKWWFDKTECNLDQETSTPNELSLSNVAGIYYILIGGLLLAVIVAIMEFFCRNKTPQLKSPGSNGSAGGVPGMLASSTYQRDSLSDAIMHSQAKLAMQASSEYDERLVGVELASNVRYQYSM</sequence>
<comment type="function">
    <text evidence="1 4">Receptor for glutamate. L-glutamate acts as an excitatory neurotransmitter at many synapses in the central nervous system. The postsynaptic actions of Glu are mediated by a variety of receptors that are named according to their selective agonists (By similarity). Forms ligand-gated ion channels which are activated by kainate.</text>
</comment>
<comment type="subunit">
    <text evidence="1">Homooligomer.</text>
</comment>
<comment type="subcellular location">
    <subcellularLocation>
        <location evidence="4">Cell membrane</location>
        <topology evidence="4">Multi-pass membrane protein</topology>
    </subcellularLocation>
    <subcellularLocation>
        <location evidence="1">Postsynaptic cell membrane</location>
        <topology evidence="1">Multi-pass membrane protein</topology>
    </subcellularLocation>
</comment>
<comment type="alternative products">
    <event type="alternative splicing"/>
    <isoform>
        <id>Q03445-1</id>
        <name>1</name>
        <name>A</name>
        <sequence type="displayed"/>
    </isoform>
    <isoform>
        <id>Q03445-2</id>
        <name>2</name>
        <sequence type="described" ref="VSP_014219"/>
    </isoform>
</comment>
<comment type="tissue specificity">
    <text evidence="4">Central nervous system.</text>
</comment>
<comment type="developmental stage">
    <text evidence="4">No expression is seen in early embryogenesis, whereas high expression occurs in late embryos. During larval development, expression decreases to undetectable levels in late larvae, resumes at the early pupal stage and gradually increases in late pupae and early adult flies. High levels of expression coincide with major stages of neurogenesis.</text>
</comment>
<comment type="similarity">
    <text evidence="6">Belongs to the glutamate-gated ion channel (TC 1.A.10.1) family.</text>
</comment>
<name>GLR1_DROME</name>
<accession>Q03445</accession>
<accession>B6IDJ5</accession>
<accession>Q86PC2</accession>
<accession>Q9VRX9</accession>
<evidence type="ECO:0000250" key="1"/>
<evidence type="ECO:0000255" key="2"/>
<evidence type="ECO:0000256" key="3">
    <source>
        <dbReference type="SAM" id="MobiDB-lite"/>
    </source>
</evidence>
<evidence type="ECO:0000269" key="4">
    <source>
    </source>
</evidence>
<evidence type="ECO:0000303" key="5">
    <source ref="4"/>
</evidence>
<evidence type="ECO:0000305" key="6"/>
<evidence type="ECO:0007829" key="7">
    <source>
        <dbReference type="PDB" id="5DT6"/>
    </source>
</evidence>
<gene>
    <name type="primary">GluRIA</name>
    <name type="synonym">Glu-RI</name>
    <name type="ORF">CG8442</name>
</gene>
<proteinExistence type="evidence at protein level"/>
<feature type="signal peptide" evidence="2">
    <location>
        <begin position="1"/>
        <end position="27"/>
    </location>
</feature>
<feature type="chain" id="PRO_0000011555" description="Glutamate receptor 1">
    <location>
        <begin position="28"/>
        <end position="991"/>
    </location>
</feature>
<feature type="topological domain" description="Extracellular" evidence="2">
    <location>
        <begin position="28"/>
        <end position="611"/>
    </location>
</feature>
<feature type="transmembrane region" description="Helical" evidence="2">
    <location>
        <begin position="612"/>
        <end position="632"/>
    </location>
</feature>
<feature type="topological domain" description="Cytoplasmic" evidence="2">
    <location>
        <begin position="633"/>
        <end position="710"/>
    </location>
</feature>
<feature type="transmembrane region" description="Helical" evidence="2">
    <location>
        <begin position="711"/>
        <end position="731"/>
    </location>
</feature>
<feature type="topological domain" description="Extracellular" evidence="2">
    <location>
        <begin position="732"/>
        <end position="895"/>
    </location>
</feature>
<feature type="transmembrane region" description="Helical" evidence="2">
    <location>
        <begin position="896"/>
        <end position="916"/>
    </location>
</feature>
<feature type="topological domain" description="Cytoplasmic" evidence="2">
    <location>
        <begin position="917"/>
        <end position="991"/>
    </location>
</feature>
<feature type="region of interest" description="Disordered" evidence="3">
    <location>
        <begin position="300"/>
        <end position="321"/>
    </location>
</feature>
<feature type="region of interest" description="Disordered" evidence="3">
    <location>
        <begin position="354"/>
        <end position="379"/>
    </location>
</feature>
<feature type="compositionally biased region" description="Polar residues" evidence="3">
    <location>
        <begin position="308"/>
        <end position="318"/>
    </location>
</feature>
<feature type="compositionally biased region" description="Low complexity" evidence="3">
    <location>
        <begin position="365"/>
        <end position="379"/>
    </location>
</feature>
<feature type="glycosylation site" description="N-linked (GlcNAc...) asparagine" evidence="2">
    <location>
        <position position="67"/>
    </location>
</feature>
<feature type="glycosylation site" description="N-linked (GlcNAc...) asparagine" evidence="2">
    <location>
        <position position="195"/>
    </location>
</feature>
<feature type="glycosylation site" description="N-linked (GlcNAc...) asparagine" evidence="2">
    <location>
        <position position="208"/>
    </location>
</feature>
<feature type="glycosylation site" description="N-linked (GlcNAc...) asparagine" evidence="2">
    <location>
        <position position="281"/>
    </location>
</feature>
<feature type="glycosylation site" description="N-linked (GlcNAc...) asparagine" evidence="2">
    <location>
        <position position="376"/>
    </location>
</feature>
<feature type="glycosylation site" description="N-linked (GlcNAc...) asparagine" evidence="2">
    <location>
        <position position="385"/>
    </location>
</feature>
<feature type="glycosylation site" description="N-linked (GlcNAc...) asparagine" evidence="2">
    <location>
        <position position="426"/>
    </location>
</feature>
<feature type="glycosylation site" description="N-linked (GlcNAc...) asparagine" evidence="2">
    <location>
        <position position="437"/>
    </location>
</feature>
<feature type="glycosylation site" description="N-linked (GlcNAc...) asparagine" evidence="2">
    <location>
        <position position="477"/>
    </location>
</feature>
<feature type="splice variant" id="VSP_014219" description="In isoform 2." evidence="5">
    <location>
        <begin position="1"/>
        <end position="265"/>
    </location>
</feature>
<feature type="sequence conflict" description="In Ref. 1; AAA28575." evidence="6" ref="1">
    <original>M</original>
    <variation>L</variation>
    <location>
        <position position="61"/>
    </location>
</feature>
<feature type="sequence conflict" description="In Ref. 1; AAA28575." evidence="6" ref="1">
    <original>S</original>
    <variation>N</variation>
    <location>
        <position position="301"/>
    </location>
</feature>
<feature type="sequence conflict" description="In Ref. 1; AAA28575." evidence="6" ref="1">
    <original>GQSQSQNA</original>
    <variation>AKAKARTQ</variation>
    <location>
        <begin position="309"/>
        <end position="316"/>
    </location>
</feature>
<feature type="sequence conflict" description="In Ref. 1; AAA28575." evidence="6" ref="1">
    <original>A</original>
    <variation>P</variation>
    <location>
        <position position="324"/>
    </location>
</feature>
<feature type="sequence conflict" description="In Ref. 1; AAA28575." evidence="6" ref="1">
    <original>T</original>
    <variation>A</variation>
    <location>
        <position position="747"/>
    </location>
</feature>
<feature type="sequence conflict" description="In Ref. 1; AAA28575." evidence="6" ref="1">
    <original>Y</original>
    <variation>H</variation>
    <location>
        <position position="759"/>
    </location>
</feature>
<feature type="sequence conflict" description="In Ref. 1; AAA28575." evidence="6" ref="1">
    <original>M</original>
    <variation>V</variation>
    <location>
        <position position="916"/>
    </location>
</feature>
<feature type="sequence conflict" description="In Ref. 1; AAA28575." evidence="6" ref="1">
    <original>A</original>
    <variation>G</variation>
    <location>
        <position position="944"/>
    </location>
</feature>
<feature type="strand" evidence="7">
    <location>
        <begin position="476"/>
        <end position="484"/>
    </location>
</feature>
<feature type="turn" evidence="7">
    <location>
        <begin position="488"/>
        <end position="490"/>
    </location>
</feature>
<feature type="strand" evidence="7">
    <location>
        <begin position="491"/>
        <end position="493"/>
    </location>
</feature>
<feature type="helix" evidence="7">
    <location>
        <begin position="504"/>
        <end position="507"/>
    </location>
</feature>
<feature type="strand" evidence="7">
    <location>
        <begin position="508"/>
        <end position="510"/>
    </location>
</feature>
<feature type="helix" evidence="7">
    <location>
        <begin position="511"/>
        <end position="523"/>
    </location>
</feature>
<feature type="strand" evidence="7">
    <location>
        <begin position="526"/>
        <end position="531"/>
    </location>
</feature>
<feature type="helix" evidence="7">
    <location>
        <begin position="550"/>
        <end position="556"/>
    </location>
</feature>
<feature type="strand" evidence="7">
    <location>
        <begin position="561"/>
        <end position="563"/>
    </location>
</feature>
<feature type="helix" evidence="7">
    <location>
        <begin position="571"/>
        <end position="574"/>
    </location>
</feature>
<feature type="strand" evidence="7">
    <location>
        <begin position="577"/>
        <end position="579"/>
    </location>
</feature>
<feature type="strand" evidence="7">
    <location>
        <begin position="583"/>
        <end position="586"/>
    </location>
</feature>
<feature type="strand" evidence="7">
    <location>
        <begin position="588"/>
        <end position="593"/>
    </location>
</feature>
<feature type="helix" evidence="7">
    <location>
        <begin position="743"/>
        <end position="746"/>
    </location>
</feature>
<feature type="strand" evidence="7">
    <location>
        <begin position="753"/>
        <end position="755"/>
    </location>
</feature>
<feature type="helix" evidence="7">
    <location>
        <begin position="761"/>
        <end position="768"/>
    </location>
</feature>
<feature type="helix" evidence="7">
    <location>
        <begin position="772"/>
        <end position="783"/>
    </location>
</feature>
<feature type="helix" evidence="7">
    <location>
        <begin position="784"/>
        <end position="787"/>
    </location>
</feature>
<feature type="strand" evidence="7">
    <location>
        <begin position="788"/>
        <end position="791"/>
    </location>
</feature>
<feature type="helix" evidence="7">
    <location>
        <begin position="792"/>
        <end position="801"/>
    </location>
</feature>
<feature type="turn" evidence="7">
    <location>
        <begin position="802"/>
        <end position="804"/>
    </location>
</feature>
<feature type="strand" evidence="7">
    <location>
        <begin position="806"/>
        <end position="811"/>
    </location>
</feature>
<feature type="helix" evidence="7">
    <location>
        <begin position="812"/>
        <end position="819"/>
    </location>
</feature>
<feature type="strand" evidence="7">
    <location>
        <begin position="826"/>
        <end position="830"/>
    </location>
</feature>
<feature type="strand" evidence="7">
    <location>
        <begin position="836"/>
        <end position="838"/>
    </location>
</feature>
<feature type="strand" evidence="7">
    <location>
        <begin position="841"/>
        <end position="843"/>
    </location>
</feature>
<feature type="helix" evidence="7">
    <location>
        <begin position="849"/>
        <end position="861"/>
    </location>
</feature>
<feature type="helix" evidence="7">
    <location>
        <begin position="864"/>
        <end position="872"/>
    </location>
</feature>
<feature type="helix" evidence="7">
    <location>
        <begin position="874"/>
        <end position="876"/>
    </location>
</feature>